<evidence type="ECO:0000250" key="1"/>
<evidence type="ECO:0000255" key="2"/>
<evidence type="ECO:0000305" key="3"/>
<reference key="1">
    <citation type="journal article" date="2005" name="Mol. Biol. Evol.">
        <title>Evolution of bitter taste receptors in humans and apes.</title>
        <authorList>
            <person name="Fischer A."/>
            <person name="Gilad Y."/>
            <person name="Man O."/>
            <person name="Paeaebo S."/>
        </authorList>
    </citation>
    <scope>NUCLEOTIDE SEQUENCE [GENOMIC DNA]</scope>
</reference>
<reference key="2">
    <citation type="journal article" date="2004" name="Proc. Natl. Acad. Sci. U.S.A.">
        <title>Divergence of T2R chemosensory receptor families in humans, bonobos, and chimpanzees.</title>
        <authorList>
            <person name="Parry C.M."/>
            <person name="Erkner A."/>
            <person name="le Coutre J."/>
        </authorList>
    </citation>
    <scope>NUCLEOTIDE SEQUENCE [GENOMIC DNA]</scope>
</reference>
<accession>Q646C8</accession>
<dbReference type="EMBL" id="AY724868">
    <property type="protein sequence ID" value="AAU21091.1"/>
    <property type="molecule type" value="Genomic_DNA"/>
</dbReference>
<dbReference type="EMBL" id="AY677144">
    <property type="protein sequence ID" value="AAV28572.1"/>
    <property type="molecule type" value="Genomic_DNA"/>
</dbReference>
<dbReference type="RefSeq" id="XP_003820603.1">
    <property type="nucleotide sequence ID" value="XM_003820555.4"/>
</dbReference>
<dbReference type="SMR" id="Q646C8"/>
<dbReference type="STRING" id="9597.ENSPPAP00000005636"/>
<dbReference type="GlyCosmos" id="Q646C8">
    <property type="glycosylation" value="2 sites, No reported glycans"/>
</dbReference>
<dbReference type="Ensembl" id="ENSPPAT00000025468.1">
    <property type="protein sequence ID" value="ENSPPAP00000005636.1"/>
    <property type="gene ID" value="ENSPPAG00000023185.1"/>
</dbReference>
<dbReference type="GeneID" id="100988706"/>
<dbReference type="KEGG" id="pps:100988706"/>
<dbReference type="CTD" id="259285"/>
<dbReference type="eggNOG" id="ENOG502SQHF">
    <property type="taxonomic scope" value="Eukaryota"/>
</dbReference>
<dbReference type="GeneTree" id="ENSGT01100000263477"/>
<dbReference type="OMA" id="LYMSNIF"/>
<dbReference type="OrthoDB" id="4489at9604"/>
<dbReference type="Proteomes" id="UP000240080">
    <property type="component" value="Chromosome 7"/>
</dbReference>
<dbReference type="GO" id="GO:0005886">
    <property type="term" value="C:plasma membrane"/>
    <property type="evidence" value="ECO:0007669"/>
    <property type="project" value="UniProtKB-ARBA"/>
</dbReference>
<dbReference type="GO" id="GO:0033038">
    <property type="term" value="F:bitter taste receptor activity"/>
    <property type="evidence" value="ECO:0007669"/>
    <property type="project" value="Ensembl"/>
</dbReference>
<dbReference type="GO" id="GO:0004930">
    <property type="term" value="F:G protein-coupled receptor activity"/>
    <property type="evidence" value="ECO:0007669"/>
    <property type="project" value="UniProtKB-KW"/>
</dbReference>
<dbReference type="CDD" id="cd15015">
    <property type="entry name" value="7tm_TAS2R39"/>
    <property type="match status" value="1"/>
</dbReference>
<dbReference type="FunFam" id="1.20.1070.10:FF:000055">
    <property type="entry name" value="Taste receptor type 2"/>
    <property type="match status" value="1"/>
</dbReference>
<dbReference type="Gene3D" id="1.20.1070.10">
    <property type="entry name" value="Rhodopsin 7-helix transmembrane proteins"/>
    <property type="match status" value="1"/>
</dbReference>
<dbReference type="InterPro" id="IPR007960">
    <property type="entry name" value="TAS2R"/>
</dbReference>
<dbReference type="PANTHER" id="PTHR11394">
    <property type="entry name" value="TASTE RECEPTOR TYPE 2"/>
    <property type="match status" value="1"/>
</dbReference>
<dbReference type="PANTHER" id="PTHR11394:SF142">
    <property type="entry name" value="TASTE RECEPTOR TYPE 2 MEMBER 39"/>
    <property type="match status" value="1"/>
</dbReference>
<dbReference type="Pfam" id="PF05296">
    <property type="entry name" value="TAS2R"/>
    <property type="match status" value="1"/>
</dbReference>
<dbReference type="SUPFAM" id="SSF81321">
    <property type="entry name" value="Family A G protein-coupled receptor-like"/>
    <property type="match status" value="1"/>
</dbReference>
<protein>
    <recommendedName>
        <fullName>Taste receptor type 2 member 39</fullName>
        <shortName>T2R39</shortName>
    </recommendedName>
</protein>
<sequence length="338" mass="38580">MLGRCFPPDTKEKQQLRMTKLCDPAESELSPFLITLILAVLLAEYLIGIIANGFIMAIHAAEWVQNKAVSTSGRILVFLSVSRIALQSLMMLEITISSTSLSFYSEDAVYYAFKISFIFLNFCSLWFAAWLSFFYFVKIANFSYPLFLKLRWRITGLIPWLLWLSVFISFSHSMFCINICTVYCNNSFPIHSSNSTKKTYLSEINVVGLAFFFNLGIVTPLIMFILTATLLILSLKRHTLHMGSNATGSNDPSMEAHMGAIKAISYFLILYIFNAVALFIYLSNMFDINSLWNNLCQIIMAAYPAGHSILPIQDNPGLRRAWKRLQLRLHLYPKEWTL</sequence>
<name>T2R39_PANPA</name>
<feature type="chain" id="PRO_0000082283" description="Taste receptor type 2 member 39">
    <location>
        <begin position="1"/>
        <end position="338"/>
    </location>
</feature>
<feature type="topological domain" description="Extracellular" evidence="2">
    <location>
        <begin position="1"/>
        <end position="30"/>
    </location>
</feature>
<feature type="transmembrane region" description="Helical; Name=1" evidence="2">
    <location>
        <begin position="31"/>
        <end position="51"/>
    </location>
</feature>
<feature type="topological domain" description="Cytoplasmic" evidence="2">
    <location>
        <begin position="52"/>
        <end position="74"/>
    </location>
</feature>
<feature type="transmembrane region" description="Helical; Name=2" evidence="2">
    <location>
        <begin position="75"/>
        <end position="95"/>
    </location>
</feature>
<feature type="topological domain" description="Extracellular" evidence="2">
    <location>
        <begin position="96"/>
        <end position="116"/>
    </location>
</feature>
<feature type="transmembrane region" description="Helical; Name=3" evidence="2">
    <location>
        <begin position="117"/>
        <end position="137"/>
    </location>
</feature>
<feature type="topological domain" description="Cytoplasmic" evidence="2">
    <location>
        <begin position="138"/>
        <end position="156"/>
    </location>
</feature>
<feature type="transmembrane region" description="Helical; Name=4" evidence="2">
    <location>
        <begin position="157"/>
        <end position="177"/>
    </location>
</feature>
<feature type="topological domain" description="Extracellular" evidence="2">
    <location>
        <begin position="178"/>
        <end position="205"/>
    </location>
</feature>
<feature type="transmembrane region" description="Helical; Name=5" evidence="2">
    <location>
        <begin position="206"/>
        <end position="226"/>
    </location>
</feature>
<feature type="topological domain" description="Cytoplasmic" evidence="2">
    <location>
        <begin position="227"/>
        <end position="262"/>
    </location>
</feature>
<feature type="transmembrane region" description="Helical; Name=6" evidence="2">
    <location>
        <begin position="263"/>
        <end position="283"/>
    </location>
</feature>
<feature type="topological domain" description="Extracellular" evidence="2">
    <location>
        <begin position="284"/>
        <end position="291"/>
    </location>
</feature>
<feature type="transmembrane region" description="Helical; Name=7" evidence="2">
    <location>
        <begin position="292"/>
        <end position="312"/>
    </location>
</feature>
<feature type="topological domain" description="Cytoplasmic" evidence="2">
    <location>
        <begin position="313"/>
        <end position="338"/>
    </location>
</feature>
<feature type="glycosylation site" description="N-linked (GlcNAc...) asparagine" evidence="2">
    <location>
        <position position="185"/>
    </location>
</feature>
<feature type="glycosylation site" description="N-linked (GlcNAc...) asparagine" evidence="2">
    <location>
        <position position="194"/>
    </location>
</feature>
<gene>
    <name type="primary">TAS2R39</name>
</gene>
<organism>
    <name type="scientific">Pan paniscus</name>
    <name type="common">Pygmy chimpanzee</name>
    <name type="synonym">Bonobo</name>
    <dbReference type="NCBI Taxonomy" id="9597"/>
    <lineage>
        <taxon>Eukaryota</taxon>
        <taxon>Metazoa</taxon>
        <taxon>Chordata</taxon>
        <taxon>Craniata</taxon>
        <taxon>Vertebrata</taxon>
        <taxon>Euteleostomi</taxon>
        <taxon>Mammalia</taxon>
        <taxon>Eutheria</taxon>
        <taxon>Euarchontoglires</taxon>
        <taxon>Primates</taxon>
        <taxon>Haplorrhini</taxon>
        <taxon>Catarrhini</taxon>
        <taxon>Hominidae</taxon>
        <taxon>Pan</taxon>
    </lineage>
</organism>
<keyword id="KW-0297">G-protein coupled receptor</keyword>
<keyword id="KW-0325">Glycoprotein</keyword>
<keyword id="KW-0472">Membrane</keyword>
<keyword id="KW-0675">Receptor</keyword>
<keyword id="KW-1185">Reference proteome</keyword>
<keyword id="KW-0716">Sensory transduction</keyword>
<keyword id="KW-0919">Taste</keyword>
<keyword id="KW-0807">Transducer</keyword>
<keyword id="KW-0812">Transmembrane</keyword>
<keyword id="KW-1133">Transmembrane helix</keyword>
<proteinExistence type="inferred from homology"/>
<comment type="function">
    <text evidence="1">Receptor that may play a role in the perception of bitterness and is gustducin-linked. May play a role in sensing the chemical composition of the gastrointestinal content. The activity of this receptor may stimulate alpha gustducin, mediate PLC-beta-2 activation and lead to the gating of TRPM5 (By similarity).</text>
</comment>
<comment type="subcellular location">
    <subcellularLocation>
        <location>Membrane</location>
        <topology>Multi-pass membrane protein</topology>
    </subcellularLocation>
</comment>
<comment type="miscellaneous">
    <text>Most taste cells may be activated by a limited number of bitter compounds; individual taste cells can discriminate among bitter stimuli.</text>
</comment>
<comment type="similarity">
    <text evidence="3">Belongs to the G-protein coupled receptor T2R family.</text>
</comment>